<sequence>MNINVAELLNGNYILLLFVVLALGLCLGKLRLGSIQLGNSIGVLVVSLLLGQQHFSINTDALNLGFMLFIFCVGVEAGPNFFSIFFRDGKNYLMLALVMVGSALVIALGLGKLFGWDIGLTAGMLAGSMTSTPVLVGAGDTLRHSGMESRQLSLALDNLSLGYALTYLIGLVSLIVGARYLPKLQHQDLQTSAQQIARERGLDTDANRKVYLPVIRAYRVGPELVAWTDGKNLRELGIYRQTGCYIERIRRNGILANPDGDAVLQMGDEIALVGYPDAHARLDPSFRNGKEVFDRDLLDMRIVTEEVVVKNHNAVGKRLAQLKLTDHGCFLNRVIRSQIEMPIDDNVVLNKGDVLQVSGDARRVKTIADRIGFISIHSQVTDLLAFCAFFVIGLMIGMITFQFSTFSFGMGNAAGLLFAGIMLGFMRANHPTFGYIPQGALSMVKEFGLMVFMAGVGLSAGSGINNGLGAIGGQMLIAGLIVSLVPVVICFLFGAYVLRMNRALLFGAMMGARTCAPAMEIISDTARSNIPALGYAGTYAIANVLLTLAGTIIVMVWPGLG</sequence>
<evidence type="ECO:0000255" key="1">
    <source>
        <dbReference type="HAMAP-Rule" id="MF_01015"/>
    </source>
</evidence>
<feature type="chain" id="PRO_1000135181" description="Putative transport protein YbjL">
    <location>
        <begin position="1"/>
        <end position="561"/>
    </location>
</feature>
<feature type="transmembrane region" description="Helical" evidence="1">
    <location>
        <begin position="8"/>
        <end position="28"/>
    </location>
</feature>
<feature type="transmembrane region" description="Helical" evidence="1">
    <location>
        <begin position="32"/>
        <end position="52"/>
    </location>
</feature>
<feature type="transmembrane region" description="Helical" evidence="1">
    <location>
        <begin position="66"/>
        <end position="86"/>
    </location>
</feature>
<feature type="transmembrane region" description="Helical" evidence="1">
    <location>
        <begin position="94"/>
        <end position="114"/>
    </location>
</feature>
<feature type="transmembrane region" description="Helical" evidence="1">
    <location>
        <begin position="158"/>
        <end position="178"/>
    </location>
</feature>
<feature type="transmembrane region" description="Helical" evidence="1">
    <location>
        <begin position="383"/>
        <end position="403"/>
    </location>
</feature>
<feature type="transmembrane region" description="Helical" evidence="1">
    <location>
        <begin position="406"/>
        <end position="426"/>
    </location>
</feature>
<feature type="transmembrane region" description="Helical" evidence="1">
    <location>
        <begin position="451"/>
        <end position="471"/>
    </location>
</feature>
<feature type="transmembrane region" description="Helical" evidence="1">
    <location>
        <begin position="475"/>
        <end position="495"/>
    </location>
</feature>
<feature type="transmembrane region" description="Helical" evidence="1">
    <location>
        <begin position="540"/>
        <end position="560"/>
    </location>
</feature>
<feature type="domain" description="RCK C-terminal 1" evidence="1">
    <location>
        <begin position="200"/>
        <end position="288"/>
    </location>
</feature>
<feature type="domain" description="RCK C-terminal 2" evidence="1">
    <location>
        <begin position="292"/>
        <end position="373"/>
    </location>
</feature>
<name>YBJL_ECO8A</name>
<dbReference type="EMBL" id="CU928160">
    <property type="protein sequence ID" value="CAQ97751.1"/>
    <property type="molecule type" value="Genomic_DNA"/>
</dbReference>
<dbReference type="RefSeq" id="WP_001024876.1">
    <property type="nucleotide sequence ID" value="NC_011741.1"/>
</dbReference>
<dbReference type="SMR" id="B7M7C2"/>
<dbReference type="KEGG" id="ecr:ECIAI1_0886"/>
<dbReference type="HOGENOM" id="CLU_035023_2_2_6"/>
<dbReference type="GO" id="GO:0005886">
    <property type="term" value="C:plasma membrane"/>
    <property type="evidence" value="ECO:0007669"/>
    <property type="project" value="UniProtKB-SubCell"/>
</dbReference>
<dbReference type="GO" id="GO:0008324">
    <property type="term" value="F:monoatomic cation transmembrane transporter activity"/>
    <property type="evidence" value="ECO:0007669"/>
    <property type="project" value="InterPro"/>
</dbReference>
<dbReference type="GO" id="GO:0006813">
    <property type="term" value="P:potassium ion transport"/>
    <property type="evidence" value="ECO:0007669"/>
    <property type="project" value="InterPro"/>
</dbReference>
<dbReference type="FunFam" id="3.30.70.1450:FF:000003">
    <property type="entry name" value="Putative transport protein YbjL"/>
    <property type="match status" value="1"/>
</dbReference>
<dbReference type="Gene3D" id="3.30.70.1450">
    <property type="entry name" value="Regulator of K+ conductance, C-terminal domain"/>
    <property type="match status" value="2"/>
</dbReference>
<dbReference type="HAMAP" id="MF_01015">
    <property type="entry name" value="YbjL"/>
    <property type="match status" value="1"/>
</dbReference>
<dbReference type="InterPro" id="IPR050144">
    <property type="entry name" value="AAE_transporter"/>
</dbReference>
<dbReference type="InterPro" id="IPR006037">
    <property type="entry name" value="RCK_C"/>
</dbReference>
<dbReference type="InterPro" id="IPR036721">
    <property type="entry name" value="RCK_C_sf"/>
</dbReference>
<dbReference type="InterPro" id="IPR023017">
    <property type="entry name" value="Transp_YbjL_put"/>
</dbReference>
<dbReference type="InterPro" id="IPR006512">
    <property type="entry name" value="YidE_YbjL"/>
</dbReference>
<dbReference type="NCBIfam" id="NF003440">
    <property type="entry name" value="PRK04972.1"/>
    <property type="match status" value="1"/>
</dbReference>
<dbReference type="NCBIfam" id="TIGR01625">
    <property type="entry name" value="YidE_YbjL_dupl"/>
    <property type="match status" value="2"/>
</dbReference>
<dbReference type="PANTHER" id="PTHR30445">
    <property type="entry name" value="K(+)_H(+) ANTIPORTER SUBUNIT KHTT"/>
    <property type="match status" value="1"/>
</dbReference>
<dbReference type="PANTHER" id="PTHR30445:SF10">
    <property type="entry name" value="TRANSPORT PROTEIN YBJL-RELATED"/>
    <property type="match status" value="1"/>
</dbReference>
<dbReference type="Pfam" id="PF06826">
    <property type="entry name" value="Asp-Al_Ex"/>
    <property type="match status" value="2"/>
</dbReference>
<dbReference type="Pfam" id="PF02080">
    <property type="entry name" value="TrkA_C"/>
    <property type="match status" value="2"/>
</dbReference>
<dbReference type="SUPFAM" id="SSF116726">
    <property type="entry name" value="TrkA C-terminal domain-like"/>
    <property type="match status" value="2"/>
</dbReference>
<dbReference type="PROSITE" id="PS51202">
    <property type="entry name" value="RCK_C"/>
    <property type="match status" value="2"/>
</dbReference>
<gene>
    <name evidence="1" type="primary">ybjL</name>
    <name type="ordered locus">ECIAI1_0886</name>
</gene>
<reference key="1">
    <citation type="journal article" date="2009" name="PLoS Genet.">
        <title>Organised genome dynamics in the Escherichia coli species results in highly diverse adaptive paths.</title>
        <authorList>
            <person name="Touchon M."/>
            <person name="Hoede C."/>
            <person name="Tenaillon O."/>
            <person name="Barbe V."/>
            <person name="Baeriswyl S."/>
            <person name="Bidet P."/>
            <person name="Bingen E."/>
            <person name="Bonacorsi S."/>
            <person name="Bouchier C."/>
            <person name="Bouvet O."/>
            <person name="Calteau A."/>
            <person name="Chiapello H."/>
            <person name="Clermont O."/>
            <person name="Cruveiller S."/>
            <person name="Danchin A."/>
            <person name="Diard M."/>
            <person name="Dossat C."/>
            <person name="Karoui M.E."/>
            <person name="Frapy E."/>
            <person name="Garry L."/>
            <person name="Ghigo J.M."/>
            <person name="Gilles A.M."/>
            <person name="Johnson J."/>
            <person name="Le Bouguenec C."/>
            <person name="Lescat M."/>
            <person name="Mangenot S."/>
            <person name="Martinez-Jehanne V."/>
            <person name="Matic I."/>
            <person name="Nassif X."/>
            <person name="Oztas S."/>
            <person name="Petit M.A."/>
            <person name="Pichon C."/>
            <person name="Rouy Z."/>
            <person name="Ruf C.S."/>
            <person name="Schneider D."/>
            <person name="Tourret J."/>
            <person name="Vacherie B."/>
            <person name="Vallenet D."/>
            <person name="Medigue C."/>
            <person name="Rocha E.P.C."/>
            <person name="Denamur E."/>
        </authorList>
    </citation>
    <scope>NUCLEOTIDE SEQUENCE [LARGE SCALE GENOMIC DNA]</scope>
    <source>
        <strain>IAI1</strain>
    </source>
</reference>
<organism>
    <name type="scientific">Escherichia coli O8 (strain IAI1)</name>
    <dbReference type="NCBI Taxonomy" id="585034"/>
    <lineage>
        <taxon>Bacteria</taxon>
        <taxon>Pseudomonadati</taxon>
        <taxon>Pseudomonadota</taxon>
        <taxon>Gammaproteobacteria</taxon>
        <taxon>Enterobacterales</taxon>
        <taxon>Enterobacteriaceae</taxon>
        <taxon>Escherichia</taxon>
    </lineage>
</organism>
<accession>B7M7C2</accession>
<keyword id="KW-1003">Cell membrane</keyword>
<keyword id="KW-0472">Membrane</keyword>
<keyword id="KW-0677">Repeat</keyword>
<keyword id="KW-0812">Transmembrane</keyword>
<keyword id="KW-1133">Transmembrane helix</keyword>
<keyword id="KW-0813">Transport</keyword>
<comment type="subcellular location">
    <subcellularLocation>
        <location evidence="1">Cell membrane</location>
        <topology evidence="1">Multi-pass membrane protein</topology>
    </subcellularLocation>
</comment>
<comment type="similarity">
    <text evidence="1">Belongs to the AAE transporter (TC 2.A.81) family. YbjL subfamily.</text>
</comment>
<protein>
    <recommendedName>
        <fullName evidence="1">Putative transport protein YbjL</fullName>
    </recommendedName>
</protein>
<proteinExistence type="inferred from homology"/>